<accession>P0AAQ6</accession>
<accession>P09161</accession>
<accession>Q2MBX1</accession>
<name>YBAA_ECOLI</name>
<sequence>MKYVDGFVVAVPADKKDAYREMAAKAAPLFKEFGALRIVECWASDVPDGKVTDFRMAVKAEENEEVVFSWIEYPSKEVRDAANQKMMSDPRMKEFGESMPFDGKRMIYGGFESIIDE</sequence>
<dbReference type="EMBL" id="X01074">
    <property type="protein sequence ID" value="CAA25537.1"/>
    <property type="molecule type" value="Genomic_DNA"/>
</dbReference>
<dbReference type="EMBL" id="U82664">
    <property type="protein sequence ID" value="AAB40211.1"/>
    <property type="molecule type" value="Genomic_DNA"/>
</dbReference>
<dbReference type="EMBL" id="U00096">
    <property type="protein sequence ID" value="AAC73558.1"/>
    <property type="molecule type" value="Genomic_DNA"/>
</dbReference>
<dbReference type="EMBL" id="AP009048">
    <property type="protein sequence ID" value="BAE76235.1"/>
    <property type="molecule type" value="Genomic_DNA"/>
</dbReference>
<dbReference type="PIR" id="S07261">
    <property type="entry name" value="S07261"/>
</dbReference>
<dbReference type="RefSeq" id="NP_414989.1">
    <property type="nucleotide sequence ID" value="NC_000913.3"/>
</dbReference>
<dbReference type="RefSeq" id="WP_000878140.1">
    <property type="nucleotide sequence ID" value="NZ_STEB01000007.1"/>
</dbReference>
<dbReference type="SMR" id="P0AAQ6"/>
<dbReference type="BioGRID" id="4259851">
    <property type="interactions" value="33"/>
</dbReference>
<dbReference type="BioGRID" id="853142">
    <property type="interactions" value="1"/>
</dbReference>
<dbReference type="FunCoup" id="P0AAQ6">
    <property type="interactions" value="72"/>
</dbReference>
<dbReference type="IntAct" id="P0AAQ6">
    <property type="interactions" value="15"/>
</dbReference>
<dbReference type="STRING" id="511145.b0456"/>
<dbReference type="TCDB" id="3.A.5.1.1">
    <property type="family name" value="the general secretory pathway (sec) family"/>
</dbReference>
<dbReference type="jPOST" id="P0AAQ6"/>
<dbReference type="PaxDb" id="511145-b0456"/>
<dbReference type="EnsemblBacteria" id="AAC73558">
    <property type="protein sequence ID" value="AAC73558"/>
    <property type="gene ID" value="b0456"/>
</dbReference>
<dbReference type="GeneID" id="948863"/>
<dbReference type="KEGG" id="ecj:JW0445"/>
<dbReference type="KEGG" id="eco:b0456"/>
<dbReference type="KEGG" id="ecoc:C3026_02235"/>
<dbReference type="PATRIC" id="fig|511145.12.peg.474"/>
<dbReference type="EchoBASE" id="EB1091"/>
<dbReference type="eggNOG" id="COG5507">
    <property type="taxonomic scope" value="Bacteria"/>
</dbReference>
<dbReference type="HOGENOM" id="CLU_136844_0_0_6"/>
<dbReference type="InParanoid" id="P0AAQ6"/>
<dbReference type="OMA" id="VECWADD"/>
<dbReference type="OrthoDB" id="9792392at2"/>
<dbReference type="PhylomeDB" id="P0AAQ6"/>
<dbReference type="BioCyc" id="EcoCyc:EG11099-MONOMER"/>
<dbReference type="PRO" id="PR:P0AAQ6"/>
<dbReference type="Proteomes" id="UP000000625">
    <property type="component" value="Chromosome"/>
</dbReference>
<dbReference type="Gene3D" id="3.30.70.100">
    <property type="match status" value="1"/>
</dbReference>
<dbReference type="InterPro" id="IPR011008">
    <property type="entry name" value="Dimeric_a/b-barrel"/>
</dbReference>
<dbReference type="InterPro" id="IPR009874">
    <property type="entry name" value="DUF1428"/>
</dbReference>
<dbReference type="Pfam" id="PF07237">
    <property type="entry name" value="DUF1428"/>
    <property type="match status" value="1"/>
</dbReference>
<dbReference type="PIRSF" id="PIRSF007028">
    <property type="entry name" value="UCP007028"/>
    <property type="match status" value="1"/>
</dbReference>
<dbReference type="SUPFAM" id="SSF54909">
    <property type="entry name" value="Dimeric alpha+beta barrel"/>
    <property type="match status" value="1"/>
</dbReference>
<gene>
    <name type="primary">ybaA</name>
    <name type="ordered locus">b0456</name>
    <name type="ordered locus">JW0445</name>
</gene>
<keyword id="KW-1185">Reference proteome</keyword>
<reference key="1">
    <citation type="journal article" date="1984" name="J. Mol. Biol.">
        <title>Cloning and sequence analysis of the Escherichia coli 4.5 S RNA gene.</title>
        <authorList>
            <person name="Hsu L.M."/>
            <person name="Zagorski J."/>
            <person name="Fournier M.J."/>
        </authorList>
    </citation>
    <scope>NUCLEOTIDE SEQUENCE [GENOMIC DNA]</scope>
</reference>
<reference key="2">
    <citation type="submission" date="1997-01" db="EMBL/GenBank/DDBJ databases">
        <title>Sequence of minutes 4-25 of Escherichia coli.</title>
        <authorList>
            <person name="Chung E."/>
            <person name="Allen E."/>
            <person name="Araujo R."/>
            <person name="Aparicio A.M."/>
            <person name="Davis K."/>
            <person name="Duncan M."/>
            <person name="Federspiel N."/>
            <person name="Hyman R."/>
            <person name="Kalman S."/>
            <person name="Komp C."/>
            <person name="Kurdi O."/>
            <person name="Lew H."/>
            <person name="Lin D."/>
            <person name="Namath A."/>
            <person name="Oefner P."/>
            <person name="Roberts D."/>
            <person name="Schramm S."/>
            <person name="Davis R.W."/>
        </authorList>
    </citation>
    <scope>NUCLEOTIDE SEQUENCE [LARGE SCALE GENOMIC DNA]</scope>
    <source>
        <strain>K12 / MG1655 / ATCC 47076</strain>
    </source>
</reference>
<reference key="3">
    <citation type="journal article" date="1997" name="Science">
        <title>The complete genome sequence of Escherichia coli K-12.</title>
        <authorList>
            <person name="Blattner F.R."/>
            <person name="Plunkett G. III"/>
            <person name="Bloch C.A."/>
            <person name="Perna N.T."/>
            <person name="Burland V."/>
            <person name="Riley M."/>
            <person name="Collado-Vides J."/>
            <person name="Glasner J.D."/>
            <person name="Rode C.K."/>
            <person name="Mayhew G.F."/>
            <person name="Gregor J."/>
            <person name="Davis N.W."/>
            <person name="Kirkpatrick H.A."/>
            <person name="Goeden M.A."/>
            <person name="Rose D.J."/>
            <person name="Mau B."/>
            <person name="Shao Y."/>
        </authorList>
    </citation>
    <scope>NUCLEOTIDE SEQUENCE [LARGE SCALE GENOMIC DNA]</scope>
    <source>
        <strain>K12 / MG1655 / ATCC 47076</strain>
    </source>
</reference>
<reference key="4">
    <citation type="journal article" date="2006" name="Mol. Syst. Biol.">
        <title>Highly accurate genome sequences of Escherichia coli K-12 strains MG1655 and W3110.</title>
        <authorList>
            <person name="Hayashi K."/>
            <person name="Morooka N."/>
            <person name="Yamamoto Y."/>
            <person name="Fujita K."/>
            <person name="Isono K."/>
            <person name="Choi S."/>
            <person name="Ohtsubo E."/>
            <person name="Baba T."/>
            <person name="Wanner B.L."/>
            <person name="Mori H."/>
            <person name="Horiuchi T."/>
        </authorList>
    </citation>
    <scope>NUCLEOTIDE SEQUENCE [LARGE SCALE GENOMIC DNA]</scope>
    <source>
        <strain>K12 / W3110 / ATCC 27325 / DSM 5911</strain>
    </source>
</reference>
<protein>
    <recommendedName>
        <fullName>Uncharacterized protein YbaA</fullName>
    </recommendedName>
</protein>
<proteinExistence type="predicted"/>
<organism>
    <name type="scientific">Escherichia coli (strain K12)</name>
    <dbReference type="NCBI Taxonomy" id="83333"/>
    <lineage>
        <taxon>Bacteria</taxon>
        <taxon>Pseudomonadati</taxon>
        <taxon>Pseudomonadota</taxon>
        <taxon>Gammaproteobacteria</taxon>
        <taxon>Enterobacterales</taxon>
        <taxon>Enterobacteriaceae</taxon>
        <taxon>Escherichia</taxon>
    </lineage>
</organism>
<feature type="chain" id="PRO_0000168612" description="Uncharacterized protein YbaA">
    <location>
        <begin position="1"/>
        <end position="117"/>
    </location>
</feature>